<keyword id="KW-0997">Cell inner membrane</keyword>
<keyword id="KW-1003">Cell membrane</keyword>
<keyword id="KW-0169">Cobalamin biosynthesis</keyword>
<keyword id="KW-0460">Magnesium</keyword>
<keyword id="KW-0472">Membrane</keyword>
<keyword id="KW-0808">Transferase</keyword>
<keyword id="KW-0812">Transmembrane</keyword>
<keyword id="KW-1133">Transmembrane helix</keyword>
<organism>
    <name type="scientific">Chlorobium phaeovibrioides (strain DSM 265 / 1930)</name>
    <name type="common">Prosthecochloris vibrioformis (strain DSM 265)</name>
    <dbReference type="NCBI Taxonomy" id="290318"/>
    <lineage>
        <taxon>Bacteria</taxon>
        <taxon>Pseudomonadati</taxon>
        <taxon>Chlorobiota</taxon>
        <taxon>Chlorobiia</taxon>
        <taxon>Chlorobiales</taxon>
        <taxon>Chlorobiaceae</taxon>
        <taxon>Chlorobium/Pelodictyon group</taxon>
        <taxon>Chlorobium</taxon>
    </lineage>
</organism>
<gene>
    <name evidence="1" type="primary">cobS</name>
    <name type="ordered locus">Cvib_0823</name>
</gene>
<name>COBS_CHLPM</name>
<evidence type="ECO:0000255" key="1">
    <source>
        <dbReference type="HAMAP-Rule" id="MF_00719"/>
    </source>
</evidence>
<protein>
    <recommendedName>
        <fullName evidence="1">Adenosylcobinamide-GDP ribazoletransferase</fullName>
        <ecNumber evidence="1">2.7.8.26</ecNumber>
    </recommendedName>
    <alternativeName>
        <fullName evidence="1">Cobalamin synthase</fullName>
    </alternativeName>
    <alternativeName>
        <fullName evidence="1">Cobalamin-5'-phosphate synthase</fullName>
    </alternativeName>
</protein>
<accession>A4SEC9</accession>
<reference key="1">
    <citation type="submission" date="2007-03" db="EMBL/GenBank/DDBJ databases">
        <title>Complete sequence of Prosthecochloris vibrioformis DSM 265.</title>
        <authorList>
            <consortium name="US DOE Joint Genome Institute"/>
            <person name="Copeland A."/>
            <person name="Lucas S."/>
            <person name="Lapidus A."/>
            <person name="Barry K."/>
            <person name="Detter J.C."/>
            <person name="Glavina del Rio T."/>
            <person name="Hammon N."/>
            <person name="Israni S."/>
            <person name="Pitluck S."/>
            <person name="Schmutz J."/>
            <person name="Larimer F."/>
            <person name="Land M."/>
            <person name="Hauser L."/>
            <person name="Mikhailova N."/>
            <person name="Li T."/>
            <person name="Overmann J."/>
            <person name="Schuster S.C."/>
            <person name="Bryant D.A."/>
            <person name="Richardson P."/>
        </authorList>
    </citation>
    <scope>NUCLEOTIDE SEQUENCE [LARGE SCALE GENOMIC DNA]</scope>
    <source>
        <strain>DSM 265 / 1930</strain>
    </source>
</reference>
<feature type="chain" id="PRO_1000083262" description="Adenosylcobinamide-GDP ribazoletransferase">
    <location>
        <begin position="1"/>
        <end position="249"/>
    </location>
</feature>
<feature type="transmembrane region" description="Helical" evidence="1">
    <location>
        <begin position="29"/>
        <end position="49"/>
    </location>
</feature>
<feature type="transmembrane region" description="Helical" evidence="1">
    <location>
        <begin position="50"/>
        <end position="70"/>
    </location>
</feature>
<feature type="transmembrane region" description="Helical" evidence="1">
    <location>
        <begin position="104"/>
        <end position="124"/>
    </location>
</feature>
<feature type="transmembrane region" description="Helical" evidence="1">
    <location>
        <begin position="131"/>
        <end position="151"/>
    </location>
</feature>
<feature type="transmembrane region" description="Helical" evidence="1">
    <location>
        <begin position="165"/>
        <end position="185"/>
    </location>
</feature>
<feature type="transmembrane region" description="Helical" evidence="1">
    <location>
        <begin position="194"/>
        <end position="214"/>
    </location>
</feature>
<feature type="transmembrane region" description="Helical" evidence="1">
    <location>
        <begin position="226"/>
        <end position="246"/>
    </location>
</feature>
<proteinExistence type="inferred from homology"/>
<comment type="function">
    <text evidence="1">Joins adenosylcobinamide-GDP and alpha-ribazole to generate adenosylcobalamin (Ado-cobalamin). Also synthesizes adenosylcobalamin 5'-phosphate from adenosylcobinamide-GDP and alpha-ribazole 5'-phosphate.</text>
</comment>
<comment type="catalytic activity">
    <reaction evidence="1">
        <text>alpha-ribazole + adenosylcob(III)inamide-GDP = adenosylcob(III)alamin + GMP + H(+)</text>
        <dbReference type="Rhea" id="RHEA:16049"/>
        <dbReference type="ChEBI" id="CHEBI:10329"/>
        <dbReference type="ChEBI" id="CHEBI:15378"/>
        <dbReference type="ChEBI" id="CHEBI:18408"/>
        <dbReference type="ChEBI" id="CHEBI:58115"/>
        <dbReference type="ChEBI" id="CHEBI:60487"/>
        <dbReference type="EC" id="2.7.8.26"/>
    </reaction>
</comment>
<comment type="catalytic activity">
    <reaction evidence="1">
        <text>alpha-ribazole 5'-phosphate + adenosylcob(III)inamide-GDP = adenosylcob(III)alamin 5'-phosphate + GMP + H(+)</text>
        <dbReference type="Rhea" id="RHEA:23560"/>
        <dbReference type="ChEBI" id="CHEBI:15378"/>
        <dbReference type="ChEBI" id="CHEBI:57918"/>
        <dbReference type="ChEBI" id="CHEBI:58115"/>
        <dbReference type="ChEBI" id="CHEBI:60487"/>
        <dbReference type="ChEBI" id="CHEBI:60493"/>
        <dbReference type="EC" id="2.7.8.26"/>
    </reaction>
</comment>
<comment type="cofactor">
    <cofactor evidence="1">
        <name>Mg(2+)</name>
        <dbReference type="ChEBI" id="CHEBI:18420"/>
    </cofactor>
</comment>
<comment type="pathway">
    <text evidence="1">Cofactor biosynthesis; adenosylcobalamin biosynthesis; adenosylcobalamin from cob(II)yrinate a,c-diamide: step 7/7.</text>
</comment>
<comment type="subcellular location">
    <subcellularLocation>
        <location evidence="1">Cell inner membrane</location>
        <topology evidence="1">Multi-pass membrane protein</topology>
    </subcellularLocation>
</comment>
<comment type="similarity">
    <text evidence="1">Belongs to the CobS family.</text>
</comment>
<dbReference type="EC" id="2.7.8.26" evidence="1"/>
<dbReference type="EMBL" id="CP000607">
    <property type="protein sequence ID" value="ABP36838.1"/>
    <property type="molecule type" value="Genomic_DNA"/>
</dbReference>
<dbReference type="STRING" id="290318.Cvib_0823"/>
<dbReference type="KEGG" id="pvi:Cvib_0823"/>
<dbReference type="eggNOG" id="COG0368">
    <property type="taxonomic scope" value="Bacteria"/>
</dbReference>
<dbReference type="HOGENOM" id="CLU_057426_1_0_10"/>
<dbReference type="OrthoDB" id="9794626at2"/>
<dbReference type="UniPathway" id="UPA00148">
    <property type="reaction ID" value="UER00238"/>
</dbReference>
<dbReference type="GO" id="GO:0005886">
    <property type="term" value="C:plasma membrane"/>
    <property type="evidence" value="ECO:0007669"/>
    <property type="project" value="UniProtKB-SubCell"/>
</dbReference>
<dbReference type="GO" id="GO:0051073">
    <property type="term" value="F:adenosylcobinamide-GDP ribazoletransferase activity"/>
    <property type="evidence" value="ECO:0007669"/>
    <property type="project" value="UniProtKB-UniRule"/>
</dbReference>
<dbReference type="GO" id="GO:0008818">
    <property type="term" value="F:cobalamin 5'-phosphate synthase activity"/>
    <property type="evidence" value="ECO:0007669"/>
    <property type="project" value="UniProtKB-UniRule"/>
</dbReference>
<dbReference type="GO" id="GO:0009236">
    <property type="term" value="P:cobalamin biosynthetic process"/>
    <property type="evidence" value="ECO:0007669"/>
    <property type="project" value="UniProtKB-UniRule"/>
</dbReference>
<dbReference type="HAMAP" id="MF_00719">
    <property type="entry name" value="CobS"/>
    <property type="match status" value="1"/>
</dbReference>
<dbReference type="InterPro" id="IPR003805">
    <property type="entry name" value="CobS"/>
</dbReference>
<dbReference type="PANTHER" id="PTHR34148">
    <property type="entry name" value="ADENOSYLCOBINAMIDE-GDP RIBAZOLETRANSFERASE"/>
    <property type="match status" value="1"/>
</dbReference>
<dbReference type="PANTHER" id="PTHR34148:SF1">
    <property type="entry name" value="ADENOSYLCOBINAMIDE-GDP RIBAZOLETRANSFERASE"/>
    <property type="match status" value="1"/>
</dbReference>
<dbReference type="Pfam" id="PF02654">
    <property type="entry name" value="CobS"/>
    <property type="match status" value="1"/>
</dbReference>
<sequence length="249" mass="25897">MLSGLVSAIRTLTIFSVPGKDAENFSSSLYWFPVVGAFLGTLLAACAWLPLSIGWSELASAVVVVGGFIVSRGMHADGLADMADGFWGGGDRERTLSIMKDPTVGSFGALALLSLMLLKWVAILRLTEHGAFALIASGVLLGRLSQVLLAASLPYARKEGGTASGFVGGAGRTHAAVALALSLMMTLPFFYRDPFLLFLLFGAALTAAALIGFLSMKKIGGITGDVLGAVSEVTELFVWLAAGVAFTAF</sequence>